<keyword id="KW-0963">Cytoplasm</keyword>
<keyword id="KW-0238">DNA-binding</keyword>
<keyword id="KW-1185">Reference proteome</keyword>
<keyword id="KW-0804">Transcription</keyword>
<keyword id="KW-0805">Transcription regulation</keyword>
<feature type="chain" id="PRO_0000175917" description="Probable transcriptional regulatory protein TM_0466">
    <location>
        <begin position="1"/>
        <end position="253"/>
    </location>
</feature>
<comment type="subcellular location">
    <subcellularLocation>
        <location evidence="1">Cytoplasm</location>
    </subcellularLocation>
</comment>
<comment type="similarity">
    <text evidence="1">Belongs to the TACO1 family.</text>
</comment>
<comment type="sequence caution" evidence="2">
    <conflict type="erroneous initiation">
        <sequence resource="EMBL-CDS" id="AAD35550"/>
    </conflict>
</comment>
<proteinExistence type="inferred from homology"/>
<evidence type="ECO:0000255" key="1">
    <source>
        <dbReference type="HAMAP-Rule" id="MF_00693"/>
    </source>
</evidence>
<evidence type="ECO:0000305" key="2"/>
<reference key="1">
    <citation type="journal article" date="1999" name="Nature">
        <title>Evidence for lateral gene transfer between Archaea and Bacteria from genome sequence of Thermotoga maritima.</title>
        <authorList>
            <person name="Nelson K.E."/>
            <person name="Clayton R.A."/>
            <person name="Gill S.R."/>
            <person name="Gwinn M.L."/>
            <person name="Dodson R.J."/>
            <person name="Haft D.H."/>
            <person name="Hickey E.K."/>
            <person name="Peterson J.D."/>
            <person name="Nelson W.C."/>
            <person name="Ketchum K.A."/>
            <person name="McDonald L.A."/>
            <person name="Utterback T.R."/>
            <person name="Malek J.A."/>
            <person name="Linher K.D."/>
            <person name="Garrett M.M."/>
            <person name="Stewart A.M."/>
            <person name="Cotton M.D."/>
            <person name="Pratt M.S."/>
            <person name="Phillips C.A."/>
            <person name="Richardson D.L."/>
            <person name="Heidelberg J.F."/>
            <person name="Sutton G.G."/>
            <person name="Fleischmann R.D."/>
            <person name="Eisen J.A."/>
            <person name="White O."/>
            <person name="Salzberg S.L."/>
            <person name="Smith H.O."/>
            <person name="Venter J.C."/>
            <person name="Fraser C.M."/>
        </authorList>
    </citation>
    <scope>NUCLEOTIDE SEQUENCE [LARGE SCALE GENOMIC DNA]</scope>
    <source>
        <strain>ATCC 43589 / DSM 3109 / JCM 10099 / NBRC 100826 / MSB8</strain>
    </source>
</reference>
<dbReference type="EMBL" id="AE000512">
    <property type="protein sequence ID" value="AAD35550.1"/>
    <property type="status" value="ALT_INIT"/>
    <property type="molecule type" value="Genomic_DNA"/>
</dbReference>
<dbReference type="PIR" id="B72374">
    <property type="entry name" value="B72374"/>
</dbReference>
<dbReference type="RefSeq" id="NP_228276.1">
    <property type="nucleotide sequence ID" value="NC_000853.1"/>
</dbReference>
<dbReference type="RefSeq" id="WP_004081500.1">
    <property type="nucleotide sequence ID" value="NZ_CP011107.1"/>
</dbReference>
<dbReference type="SMR" id="Q9WYT7"/>
<dbReference type="FunCoup" id="Q9WYT7">
    <property type="interactions" value="333"/>
</dbReference>
<dbReference type="STRING" id="243274.TM_0466"/>
<dbReference type="PaxDb" id="243274-THEMA_02360"/>
<dbReference type="EnsemblBacteria" id="AAD35550">
    <property type="protein sequence ID" value="AAD35550"/>
    <property type="gene ID" value="TM_0466"/>
</dbReference>
<dbReference type="KEGG" id="tma:TM0466"/>
<dbReference type="KEGG" id="tmi:THEMA_02360"/>
<dbReference type="KEGG" id="tmm:Tmari_0463"/>
<dbReference type="KEGG" id="tmw:THMA_0475"/>
<dbReference type="PATRIC" id="fig|243274.5.peg.473"/>
<dbReference type="eggNOG" id="COG0217">
    <property type="taxonomic scope" value="Bacteria"/>
</dbReference>
<dbReference type="InParanoid" id="Q9WYT7"/>
<dbReference type="OrthoDB" id="9781053at2"/>
<dbReference type="Proteomes" id="UP000008183">
    <property type="component" value="Chromosome"/>
</dbReference>
<dbReference type="GO" id="GO:0005829">
    <property type="term" value="C:cytosol"/>
    <property type="evidence" value="ECO:0000318"/>
    <property type="project" value="GO_Central"/>
</dbReference>
<dbReference type="GO" id="GO:0003677">
    <property type="term" value="F:DNA binding"/>
    <property type="evidence" value="ECO:0007669"/>
    <property type="project" value="UniProtKB-UniRule"/>
</dbReference>
<dbReference type="GO" id="GO:0006355">
    <property type="term" value="P:regulation of DNA-templated transcription"/>
    <property type="evidence" value="ECO:0007669"/>
    <property type="project" value="UniProtKB-UniRule"/>
</dbReference>
<dbReference type="FunFam" id="1.10.10.200:FF:000001">
    <property type="entry name" value="Probable transcriptional regulatory protein YebC"/>
    <property type="match status" value="1"/>
</dbReference>
<dbReference type="FunFam" id="3.30.70.980:FF:000002">
    <property type="entry name" value="Probable transcriptional regulatory protein YebC"/>
    <property type="match status" value="1"/>
</dbReference>
<dbReference type="Gene3D" id="1.10.10.200">
    <property type="match status" value="1"/>
</dbReference>
<dbReference type="Gene3D" id="3.30.70.980">
    <property type="match status" value="2"/>
</dbReference>
<dbReference type="HAMAP" id="MF_00693">
    <property type="entry name" value="Transcrip_reg_TACO1"/>
    <property type="match status" value="1"/>
</dbReference>
<dbReference type="InterPro" id="IPR017856">
    <property type="entry name" value="Integrase-like_N"/>
</dbReference>
<dbReference type="InterPro" id="IPR048300">
    <property type="entry name" value="TACO1_YebC-like_2nd/3rd_dom"/>
</dbReference>
<dbReference type="InterPro" id="IPR049083">
    <property type="entry name" value="TACO1_YebC_N"/>
</dbReference>
<dbReference type="InterPro" id="IPR002876">
    <property type="entry name" value="Transcrip_reg_TACO1-like"/>
</dbReference>
<dbReference type="InterPro" id="IPR026564">
    <property type="entry name" value="Transcrip_reg_TACO1-like_dom3"/>
</dbReference>
<dbReference type="InterPro" id="IPR029072">
    <property type="entry name" value="YebC-like"/>
</dbReference>
<dbReference type="NCBIfam" id="NF001030">
    <property type="entry name" value="PRK00110.1"/>
    <property type="match status" value="1"/>
</dbReference>
<dbReference type="NCBIfam" id="NF009044">
    <property type="entry name" value="PRK12378.1"/>
    <property type="match status" value="1"/>
</dbReference>
<dbReference type="NCBIfam" id="TIGR01033">
    <property type="entry name" value="YebC/PmpR family DNA-binding transcriptional regulator"/>
    <property type="match status" value="1"/>
</dbReference>
<dbReference type="PANTHER" id="PTHR12532:SF6">
    <property type="entry name" value="TRANSCRIPTIONAL REGULATORY PROTEIN YEBC-RELATED"/>
    <property type="match status" value="1"/>
</dbReference>
<dbReference type="PANTHER" id="PTHR12532">
    <property type="entry name" value="TRANSLATIONAL ACTIVATOR OF CYTOCHROME C OXIDASE 1"/>
    <property type="match status" value="1"/>
</dbReference>
<dbReference type="Pfam" id="PF20772">
    <property type="entry name" value="TACO1_YebC_N"/>
    <property type="match status" value="1"/>
</dbReference>
<dbReference type="Pfam" id="PF01709">
    <property type="entry name" value="Transcrip_reg"/>
    <property type="match status" value="1"/>
</dbReference>
<dbReference type="SUPFAM" id="SSF75625">
    <property type="entry name" value="YebC-like"/>
    <property type="match status" value="1"/>
</dbReference>
<gene>
    <name type="ordered locus">TM_0466</name>
</gene>
<sequence length="253" mass="28463">MSGHNKWANIKHRKMAQDAKKSKIFTKLIREIIVAAREGGGNIETNPRLRAAVERARAENMPKENIERAIKRGTGELEGVDYQEVIYEGYAPGGVAVYIRALTDNKNRTAQELRHLFNKYGGSLAESGSVSWIFERKGVIEISRDKVKDLEELMMIAIDAGAEDIKDAEDPIQIITAPENLSEVKSKLEEAGYEVEAKVTFIPKNTVKVTGKDAEKVLEFLNALEDMDDVQEVYSNFEMDDKEMEEILSRLEG</sequence>
<protein>
    <recommendedName>
        <fullName evidence="1">Probable transcriptional regulatory protein TM_0466</fullName>
    </recommendedName>
</protein>
<accession>Q9WYT7</accession>
<organism>
    <name type="scientific">Thermotoga maritima (strain ATCC 43589 / DSM 3109 / JCM 10099 / NBRC 100826 / MSB8)</name>
    <dbReference type="NCBI Taxonomy" id="243274"/>
    <lineage>
        <taxon>Bacteria</taxon>
        <taxon>Thermotogati</taxon>
        <taxon>Thermotogota</taxon>
        <taxon>Thermotogae</taxon>
        <taxon>Thermotogales</taxon>
        <taxon>Thermotogaceae</taxon>
        <taxon>Thermotoga</taxon>
    </lineage>
</organism>
<name>Y466_THEMA</name>